<comment type="similarity">
    <text evidence="1">Belongs to the bacterial ribosomal protein bL27 family.</text>
</comment>
<sequence>MAHKKAGGSTRNGRDSEAKRLGVKRFGGESVLAGSIIVRQRGTKFHAGANVGCGRDHTLFAKADGKVKFEVKGPKNRKFISIEAE</sequence>
<proteinExistence type="inferred from homology"/>
<organism>
    <name type="scientific">Shigella boydii serotype 4 (strain Sb227)</name>
    <dbReference type="NCBI Taxonomy" id="300268"/>
    <lineage>
        <taxon>Bacteria</taxon>
        <taxon>Pseudomonadati</taxon>
        <taxon>Pseudomonadota</taxon>
        <taxon>Gammaproteobacteria</taxon>
        <taxon>Enterobacterales</taxon>
        <taxon>Enterobacteriaceae</taxon>
        <taxon>Shigella</taxon>
    </lineage>
</organism>
<name>RL27_SHIBS</name>
<evidence type="ECO:0000255" key="1">
    <source>
        <dbReference type="HAMAP-Rule" id="MF_00539"/>
    </source>
</evidence>
<evidence type="ECO:0000256" key="2">
    <source>
        <dbReference type="SAM" id="MobiDB-lite"/>
    </source>
</evidence>
<evidence type="ECO:0000305" key="3"/>
<protein>
    <recommendedName>
        <fullName evidence="1">Large ribosomal subunit protein bL27</fullName>
    </recommendedName>
    <alternativeName>
        <fullName evidence="3">50S ribosomal protein L27</fullName>
    </alternativeName>
</protein>
<gene>
    <name evidence="1" type="primary">rpmA</name>
    <name type="ordered locus">SBO_3197</name>
</gene>
<feature type="chain" id="PRO_1000017607" description="Large ribosomal subunit protein bL27">
    <location>
        <begin position="1"/>
        <end position="85"/>
    </location>
</feature>
<feature type="region of interest" description="Disordered" evidence="2">
    <location>
        <begin position="1"/>
        <end position="20"/>
    </location>
</feature>
<keyword id="KW-0687">Ribonucleoprotein</keyword>
<keyword id="KW-0689">Ribosomal protein</keyword>
<accession>Q31W62</accession>
<reference key="1">
    <citation type="journal article" date="2005" name="Nucleic Acids Res.">
        <title>Genome dynamics and diversity of Shigella species, the etiologic agents of bacillary dysentery.</title>
        <authorList>
            <person name="Yang F."/>
            <person name="Yang J."/>
            <person name="Zhang X."/>
            <person name="Chen L."/>
            <person name="Jiang Y."/>
            <person name="Yan Y."/>
            <person name="Tang X."/>
            <person name="Wang J."/>
            <person name="Xiong Z."/>
            <person name="Dong J."/>
            <person name="Xue Y."/>
            <person name="Zhu Y."/>
            <person name="Xu X."/>
            <person name="Sun L."/>
            <person name="Chen S."/>
            <person name="Nie H."/>
            <person name="Peng J."/>
            <person name="Xu J."/>
            <person name="Wang Y."/>
            <person name="Yuan Z."/>
            <person name="Wen Y."/>
            <person name="Yao Z."/>
            <person name="Shen Y."/>
            <person name="Qiang B."/>
            <person name="Hou Y."/>
            <person name="Yu J."/>
            <person name="Jin Q."/>
        </authorList>
    </citation>
    <scope>NUCLEOTIDE SEQUENCE [LARGE SCALE GENOMIC DNA]</scope>
    <source>
        <strain>Sb227</strain>
    </source>
</reference>
<dbReference type="EMBL" id="CP000036">
    <property type="protein sequence ID" value="ABB67696.1"/>
    <property type="molecule type" value="Genomic_DNA"/>
</dbReference>
<dbReference type="RefSeq" id="WP_000940595.1">
    <property type="nucleotide sequence ID" value="NC_007613.1"/>
</dbReference>
<dbReference type="SMR" id="Q31W62"/>
<dbReference type="GeneID" id="93778796"/>
<dbReference type="KEGG" id="sbo:SBO_3197"/>
<dbReference type="HOGENOM" id="CLU_095424_4_1_6"/>
<dbReference type="Proteomes" id="UP000007067">
    <property type="component" value="Chromosome"/>
</dbReference>
<dbReference type="GO" id="GO:0022625">
    <property type="term" value="C:cytosolic large ribosomal subunit"/>
    <property type="evidence" value="ECO:0007669"/>
    <property type="project" value="TreeGrafter"/>
</dbReference>
<dbReference type="GO" id="GO:0003735">
    <property type="term" value="F:structural constituent of ribosome"/>
    <property type="evidence" value="ECO:0007669"/>
    <property type="project" value="InterPro"/>
</dbReference>
<dbReference type="GO" id="GO:0006412">
    <property type="term" value="P:translation"/>
    <property type="evidence" value="ECO:0007669"/>
    <property type="project" value="UniProtKB-UniRule"/>
</dbReference>
<dbReference type="FunFam" id="2.40.50.100:FF:000001">
    <property type="entry name" value="50S ribosomal protein L27"/>
    <property type="match status" value="1"/>
</dbReference>
<dbReference type="Gene3D" id="2.40.50.100">
    <property type="match status" value="1"/>
</dbReference>
<dbReference type="HAMAP" id="MF_00539">
    <property type="entry name" value="Ribosomal_bL27"/>
    <property type="match status" value="1"/>
</dbReference>
<dbReference type="InterPro" id="IPR001684">
    <property type="entry name" value="Ribosomal_bL27"/>
</dbReference>
<dbReference type="InterPro" id="IPR018261">
    <property type="entry name" value="Ribosomal_bL27_CS"/>
</dbReference>
<dbReference type="NCBIfam" id="TIGR00062">
    <property type="entry name" value="L27"/>
    <property type="match status" value="1"/>
</dbReference>
<dbReference type="PANTHER" id="PTHR15893:SF0">
    <property type="entry name" value="LARGE RIBOSOMAL SUBUNIT PROTEIN BL27M"/>
    <property type="match status" value="1"/>
</dbReference>
<dbReference type="PANTHER" id="PTHR15893">
    <property type="entry name" value="RIBOSOMAL PROTEIN L27"/>
    <property type="match status" value="1"/>
</dbReference>
<dbReference type="Pfam" id="PF01016">
    <property type="entry name" value="Ribosomal_L27"/>
    <property type="match status" value="1"/>
</dbReference>
<dbReference type="PRINTS" id="PR00063">
    <property type="entry name" value="RIBOSOMALL27"/>
</dbReference>
<dbReference type="SUPFAM" id="SSF110324">
    <property type="entry name" value="Ribosomal L27 protein-like"/>
    <property type="match status" value="1"/>
</dbReference>
<dbReference type="PROSITE" id="PS00831">
    <property type="entry name" value="RIBOSOMAL_L27"/>
    <property type="match status" value="1"/>
</dbReference>